<organism>
    <name type="scientific">Methanopyrus kandleri (strain AV19 / DSM 6324 / JCM 9639 / NBRC 100938)</name>
    <dbReference type="NCBI Taxonomy" id="190192"/>
    <lineage>
        <taxon>Archaea</taxon>
        <taxon>Methanobacteriati</taxon>
        <taxon>Methanobacteriota</taxon>
        <taxon>Methanomada group</taxon>
        <taxon>Methanopyri</taxon>
        <taxon>Methanopyrales</taxon>
        <taxon>Methanopyraceae</taxon>
        <taxon>Methanopyrus</taxon>
    </lineage>
</organism>
<accession>P58879</accession>
<sequence>MNSVRTADVKRTTKETEVEVSVNLDGSGRAKVDTGLPFFDHLLHQFAFHGRIDVEIKARGDLEVDDHHTVEDVGICLGKALNEALGDREGIRRIAWALVPMDEALVECAVDISGRPYFVLKGYRPRRNRIGSPPLSTENVSHFWKSFCDHAGVTMHVVVRWWDNDHHAIEAMFKAVGRALGAAKEIVGDGVPSTKGTLRRG</sequence>
<proteinExistence type="inferred from homology"/>
<keyword id="KW-0028">Amino-acid biosynthesis</keyword>
<keyword id="KW-0963">Cytoplasm</keyword>
<keyword id="KW-0368">Histidine biosynthesis</keyword>
<keyword id="KW-0456">Lyase</keyword>
<keyword id="KW-1185">Reference proteome</keyword>
<name>HIS7_METKA</name>
<evidence type="ECO:0000255" key="1">
    <source>
        <dbReference type="HAMAP-Rule" id="MF_00076"/>
    </source>
</evidence>
<reference key="1">
    <citation type="journal article" date="2002" name="Proc. Natl. Acad. Sci. U.S.A.">
        <title>The complete genome of hyperthermophile Methanopyrus kandleri AV19 and monophyly of archaeal methanogens.</title>
        <authorList>
            <person name="Slesarev A.I."/>
            <person name="Mezhevaya K.V."/>
            <person name="Makarova K.S."/>
            <person name="Polushin N.N."/>
            <person name="Shcherbinina O.V."/>
            <person name="Shakhova V.V."/>
            <person name="Belova G.I."/>
            <person name="Aravind L."/>
            <person name="Natale D.A."/>
            <person name="Rogozin I.B."/>
            <person name="Tatusov R.L."/>
            <person name="Wolf Y.I."/>
            <person name="Stetter K.O."/>
            <person name="Malykh A.G."/>
            <person name="Koonin E.V."/>
            <person name="Kozyavkin S.A."/>
        </authorList>
    </citation>
    <scope>NUCLEOTIDE SEQUENCE [LARGE SCALE GENOMIC DNA]</scope>
    <source>
        <strain>AV19 / DSM 6324 / JCM 9639 / NBRC 100938</strain>
    </source>
</reference>
<feature type="chain" id="PRO_0000158190" description="Imidazoleglycerol-phosphate dehydratase">
    <location>
        <begin position="1"/>
        <end position="201"/>
    </location>
</feature>
<comment type="catalytic activity">
    <reaction evidence="1">
        <text>D-erythro-1-(imidazol-4-yl)glycerol 3-phosphate = 3-(imidazol-4-yl)-2-oxopropyl phosphate + H2O</text>
        <dbReference type="Rhea" id="RHEA:11040"/>
        <dbReference type="ChEBI" id="CHEBI:15377"/>
        <dbReference type="ChEBI" id="CHEBI:57766"/>
        <dbReference type="ChEBI" id="CHEBI:58278"/>
        <dbReference type="EC" id="4.2.1.19"/>
    </reaction>
</comment>
<comment type="pathway">
    <text evidence="1">Amino-acid biosynthesis; L-histidine biosynthesis; L-histidine from 5-phospho-alpha-D-ribose 1-diphosphate: step 6/9.</text>
</comment>
<comment type="subcellular location">
    <subcellularLocation>
        <location evidence="1">Cytoplasm</location>
    </subcellularLocation>
</comment>
<comment type="similarity">
    <text evidence="1">Belongs to the imidazoleglycerol-phosphate dehydratase family.</text>
</comment>
<protein>
    <recommendedName>
        <fullName evidence="1">Imidazoleglycerol-phosphate dehydratase</fullName>
        <shortName evidence="1">IGPD</shortName>
        <ecNumber evidence="1">4.2.1.19</ecNumber>
    </recommendedName>
</protein>
<gene>
    <name evidence="1" type="primary">hisB</name>
    <name type="ordered locus">MK0855</name>
</gene>
<dbReference type="EC" id="4.2.1.19" evidence="1"/>
<dbReference type="EMBL" id="AE009439">
    <property type="protein sequence ID" value="AAM02068.1"/>
    <property type="molecule type" value="Genomic_DNA"/>
</dbReference>
<dbReference type="RefSeq" id="WP_011019223.1">
    <property type="nucleotide sequence ID" value="NC_003551.1"/>
</dbReference>
<dbReference type="SMR" id="P58879"/>
<dbReference type="FunCoup" id="P58879">
    <property type="interactions" value="91"/>
</dbReference>
<dbReference type="STRING" id="190192.MK0855"/>
<dbReference type="PaxDb" id="190192-MK0855"/>
<dbReference type="EnsemblBacteria" id="AAM02068">
    <property type="protein sequence ID" value="AAM02068"/>
    <property type="gene ID" value="MK0855"/>
</dbReference>
<dbReference type="GeneID" id="1476956"/>
<dbReference type="KEGG" id="mka:MK0855"/>
<dbReference type="PATRIC" id="fig|190192.8.peg.898"/>
<dbReference type="HOGENOM" id="CLU_044308_3_0_2"/>
<dbReference type="InParanoid" id="P58879"/>
<dbReference type="OrthoDB" id="103579at2157"/>
<dbReference type="UniPathway" id="UPA00031">
    <property type="reaction ID" value="UER00011"/>
</dbReference>
<dbReference type="Proteomes" id="UP000001826">
    <property type="component" value="Chromosome"/>
</dbReference>
<dbReference type="GO" id="GO:0005737">
    <property type="term" value="C:cytoplasm"/>
    <property type="evidence" value="ECO:0007669"/>
    <property type="project" value="UniProtKB-SubCell"/>
</dbReference>
<dbReference type="GO" id="GO:0004424">
    <property type="term" value="F:imidazoleglycerol-phosphate dehydratase activity"/>
    <property type="evidence" value="ECO:0007669"/>
    <property type="project" value="UniProtKB-UniRule"/>
</dbReference>
<dbReference type="GO" id="GO:0000105">
    <property type="term" value="P:L-histidine biosynthetic process"/>
    <property type="evidence" value="ECO:0007669"/>
    <property type="project" value="UniProtKB-UniRule"/>
</dbReference>
<dbReference type="CDD" id="cd07914">
    <property type="entry name" value="IGPD"/>
    <property type="match status" value="1"/>
</dbReference>
<dbReference type="FunFam" id="3.30.230.40:FF:000001">
    <property type="entry name" value="Imidazoleglycerol-phosphate dehydratase HisB"/>
    <property type="match status" value="1"/>
</dbReference>
<dbReference type="FunFam" id="3.30.230.40:FF:000003">
    <property type="entry name" value="Imidazoleglycerol-phosphate dehydratase HisB"/>
    <property type="match status" value="1"/>
</dbReference>
<dbReference type="Gene3D" id="3.30.230.40">
    <property type="entry name" value="Imidazole glycerol phosphate dehydratase, domain 1"/>
    <property type="match status" value="2"/>
</dbReference>
<dbReference type="HAMAP" id="MF_00076">
    <property type="entry name" value="HisB"/>
    <property type="match status" value="1"/>
</dbReference>
<dbReference type="InterPro" id="IPR038494">
    <property type="entry name" value="IGPD_sf"/>
</dbReference>
<dbReference type="InterPro" id="IPR000807">
    <property type="entry name" value="ImidazoleglycerolP_deHydtase"/>
</dbReference>
<dbReference type="InterPro" id="IPR020565">
    <property type="entry name" value="ImidazoleglycerP_deHydtase_CS"/>
</dbReference>
<dbReference type="InterPro" id="IPR020568">
    <property type="entry name" value="Ribosomal_Su5_D2-typ_SF"/>
</dbReference>
<dbReference type="NCBIfam" id="NF002111">
    <property type="entry name" value="PRK00951.2-1"/>
    <property type="match status" value="1"/>
</dbReference>
<dbReference type="NCBIfam" id="NF002114">
    <property type="entry name" value="PRK00951.2-4"/>
    <property type="match status" value="1"/>
</dbReference>
<dbReference type="PANTHER" id="PTHR23133:SF2">
    <property type="entry name" value="IMIDAZOLEGLYCEROL-PHOSPHATE DEHYDRATASE"/>
    <property type="match status" value="1"/>
</dbReference>
<dbReference type="PANTHER" id="PTHR23133">
    <property type="entry name" value="IMIDAZOLEGLYCEROL-PHOSPHATE DEHYDRATASE HIS7"/>
    <property type="match status" value="1"/>
</dbReference>
<dbReference type="Pfam" id="PF00475">
    <property type="entry name" value="IGPD"/>
    <property type="match status" value="1"/>
</dbReference>
<dbReference type="SUPFAM" id="SSF54211">
    <property type="entry name" value="Ribosomal protein S5 domain 2-like"/>
    <property type="match status" value="2"/>
</dbReference>
<dbReference type="PROSITE" id="PS00954">
    <property type="entry name" value="IGP_DEHYDRATASE_1"/>
    <property type="match status" value="1"/>
</dbReference>
<dbReference type="PROSITE" id="PS00955">
    <property type="entry name" value="IGP_DEHYDRATASE_2"/>
    <property type="match status" value="1"/>
</dbReference>